<evidence type="ECO:0000255" key="1">
    <source>
        <dbReference type="HAMAP-Rule" id="MF_00480"/>
    </source>
</evidence>
<evidence type="ECO:0000305" key="2"/>
<sequence length="156" mass="17652">MSRKNQAPKREVLPDPLYNSKIVTRLINRVMLDGKRGTAATIVYDAFSAIKEATGNDALEVFETAMDNIMPVLEVRARRVGGSNYQVPVEVRPERRTTLGLRWLVNASRARGEHTMKDRLAKEIMDAANNTGASVKKREDTHKMAEANRAFAHFRW</sequence>
<reference key="1">
    <citation type="journal article" date="2008" name="J. Bacteriol.">
        <title>Genome sequence of a nephritogenic and highly transformable M49 strain of Streptococcus pyogenes.</title>
        <authorList>
            <person name="McShan W.M."/>
            <person name="Ferretti J.J."/>
            <person name="Karasawa T."/>
            <person name="Suvorov A.N."/>
            <person name="Lin S."/>
            <person name="Qin B."/>
            <person name="Jia H."/>
            <person name="Kenton S."/>
            <person name="Najar F."/>
            <person name="Wu H."/>
            <person name="Scott J."/>
            <person name="Roe B.A."/>
            <person name="Savic D.J."/>
        </authorList>
    </citation>
    <scope>NUCLEOTIDE SEQUENCE [LARGE SCALE GENOMIC DNA]</scope>
    <source>
        <strain>NZ131</strain>
    </source>
</reference>
<protein>
    <recommendedName>
        <fullName evidence="1">Small ribosomal subunit protein uS7</fullName>
    </recommendedName>
    <alternativeName>
        <fullName evidence="2">30S ribosomal protein S7</fullName>
    </alternativeName>
</protein>
<organism>
    <name type="scientific">Streptococcus pyogenes serotype M49 (strain NZ131)</name>
    <dbReference type="NCBI Taxonomy" id="471876"/>
    <lineage>
        <taxon>Bacteria</taxon>
        <taxon>Bacillati</taxon>
        <taxon>Bacillota</taxon>
        <taxon>Bacilli</taxon>
        <taxon>Lactobacillales</taxon>
        <taxon>Streptococcaceae</taxon>
        <taxon>Streptococcus</taxon>
    </lineage>
</organism>
<feature type="chain" id="PRO_1000126011" description="Small ribosomal subunit protein uS7">
    <location>
        <begin position="1"/>
        <end position="156"/>
    </location>
</feature>
<dbReference type="EMBL" id="CP000829">
    <property type="protein sequence ID" value="ACI60572.1"/>
    <property type="molecule type" value="Genomic_DNA"/>
</dbReference>
<dbReference type="SMR" id="B5XJR0"/>
<dbReference type="KEGG" id="soz:Spy49_0231"/>
<dbReference type="HOGENOM" id="CLU_072226_1_1_9"/>
<dbReference type="Proteomes" id="UP000001039">
    <property type="component" value="Chromosome"/>
</dbReference>
<dbReference type="GO" id="GO:0015935">
    <property type="term" value="C:small ribosomal subunit"/>
    <property type="evidence" value="ECO:0007669"/>
    <property type="project" value="InterPro"/>
</dbReference>
<dbReference type="GO" id="GO:0019843">
    <property type="term" value="F:rRNA binding"/>
    <property type="evidence" value="ECO:0007669"/>
    <property type="project" value="UniProtKB-UniRule"/>
</dbReference>
<dbReference type="GO" id="GO:0003735">
    <property type="term" value="F:structural constituent of ribosome"/>
    <property type="evidence" value="ECO:0007669"/>
    <property type="project" value="InterPro"/>
</dbReference>
<dbReference type="GO" id="GO:0000049">
    <property type="term" value="F:tRNA binding"/>
    <property type="evidence" value="ECO:0007669"/>
    <property type="project" value="UniProtKB-UniRule"/>
</dbReference>
<dbReference type="GO" id="GO:0006412">
    <property type="term" value="P:translation"/>
    <property type="evidence" value="ECO:0007669"/>
    <property type="project" value="UniProtKB-UniRule"/>
</dbReference>
<dbReference type="CDD" id="cd14869">
    <property type="entry name" value="uS7_Bacteria"/>
    <property type="match status" value="1"/>
</dbReference>
<dbReference type="FunFam" id="1.10.455.10:FF:000001">
    <property type="entry name" value="30S ribosomal protein S7"/>
    <property type="match status" value="1"/>
</dbReference>
<dbReference type="Gene3D" id="1.10.455.10">
    <property type="entry name" value="Ribosomal protein S7 domain"/>
    <property type="match status" value="1"/>
</dbReference>
<dbReference type="HAMAP" id="MF_00480_B">
    <property type="entry name" value="Ribosomal_uS7_B"/>
    <property type="match status" value="1"/>
</dbReference>
<dbReference type="InterPro" id="IPR000235">
    <property type="entry name" value="Ribosomal_uS7"/>
</dbReference>
<dbReference type="InterPro" id="IPR005717">
    <property type="entry name" value="Ribosomal_uS7_bac/org-type"/>
</dbReference>
<dbReference type="InterPro" id="IPR020606">
    <property type="entry name" value="Ribosomal_uS7_CS"/>
</dbReference>
<dbReference type="InterPro" id="IPR023798">
    <property type="entry name" value="Ribosomal_uS7_dom"/>
</dbReference>
<dbReference type="InterPro" id="IPR036823">
    <property type="entry name" value="Ribosomal_uS7_dom_sf"/>
</dbReference>
<dbReference type="NCBIfam" id="TIGR01029">
    <property type="entry name" value="rpsG_bact"/>
    <property type="match status" value="1"/>
</dbReference>
<dbReference type="PANTHER" id="PTHR11205">
    <property type="entry name" value="RIBOSOMAL PROTEIN S7"/>
    <property type="match status" value="1"/>
</dbReference>
<dbReference type="Pfam" id="PF00177">
    <property type="entry name" value="Ribosomal_S7"/>
    <property type="match status" value="1"/>
</dbReference>
<dbReference type="PIRSF" id="PIRSF002122">
    <property type="entry name" value="RPS7p_RPS7a_RPS5e_RPS7o"/>
    <property type="match status" value="1"/>
</dbReference>
<dbReference type="SUPFAM" id="SSF47973">
    <property type="entry name" value="Ribosomal protein S7"/>
    <property type="match status" value="1"/>
</dbReference>
<dbReference type="PROSITE" id="PS00052">
    <property type="entry name" value="RIBOSOMAL_S7"/>
    <property type="match status" value="1"/>
</dbReference>
<gene>
    <name evidence="1" type="primary">rpsG</name>
    <name type="ordered locus">Spy49_0231</name>
</gene>
<proteinExistence type="inferred from homology"/>
<keyword id="KW-0687">Ribonucleoprotein</keyword>
<keyword id="KW-0689">Ribosomal protein</keyword>
<keyword id="KW-0694">RNA-binding</keyword>
<keyword id="KW-0699">rRNA-binding</keyword>
<keyword id="KW-0820">tRNA-binding</keyword>
<accession>B5XJR0</accession>
<comment type="function">
    <text evidence="1">One of the primary rRNA binding proteins, it binds directly to 16S rRNA where it nucleates assembly of the head domain of the 30S subunit. Is located at the subunit interface close to the decoding center, probably blocks exit of the E-site tRNA.</text>
</comment>
<comment type="subunit">
    <text evidence="1">Part of the 30S ribosomal subunit. Contacts proteins S9 and S11.</text>
</comment>
<comment type="similarity">
    <text evidence="1">Belongs to the universal ribosomal protein uS7 family.</text>
</comment>
<name>RS7_STRPZ</name>